<gene>
    <name type="primary">Hacl1</name>
    <name type="synonym">Hpcl</name>
    <name type="synonym">Phyh2</name>
</gene>
<feature type="chain" id="PRO_0000090817" description="2-hydroxyacyl-CoA lyase 1">
    <location>
        <begin position="1"/>
        <end position="581"/>
    </location>
</feature>
<feature type="region of interest" description="Thiamine pyrophosphate binding" evidence="1">
    <location>
        <begin position="404"/>
        <end position="487"/>
    </location>
</feature>
<feature type="short sequence motif" description="Microbody targeting signal" evidence="3">
    <location>
        <begin position="579"/>
        <end position="581"/>
    </location>
</feature>
<feature type="binding site" evidence="1">
    <location>
        <position position="63"/>
    </location>
    <ligand>
        <name>thiamine diphosphate</name>
        <dbReference type="ChEBI" id="CHEBI:58937"/>
    </ligand>
</feature>
<feature type="binding site" evidence="1">
    <location>
        <position position="458"/>
    </location>
    <ligand>
        <name>Mg(2+)</name>
        <dbReference type="ChEBI" id="CHEBI:18420"/>
    </ligand>
</feature>
<feature type="binding site" evidence="1">
    <location>
        <position position="485"/>
    </location>
    <ligand>
        <name>Mg(2+)</name>
        <dbReference type="ChEBI" id="CHEBI:18420"/>
    </ligand>
</feature>
<feature type="modified residue" description="Phosphoserine" evidence="3">
    <location>
        <position position="4"/>
    </location>
</feature>
<feature type="modified residue" description="Phosphoserine" evidence="2">
    <location>
        <position position="6"/>
    </location>
</feature>
<feature type="modified residue" description="N6-succinyllysine" evidence="7">
    <location>
        <position position="354"/>
    </location>
</feature>
<feature type="modified residue" description="N6-succinyllysine" evidence="7">
    <location>
        <position position="361"/>
    </location>
</feature>
<feature type="modified residue" description="N6-succinyllysine" evidence="7">
    <location>
        <position position="368"/>
    </location>
</feature>
<feature type="sequence conflict" description="In Ref. 1; CAB65550." evidence="6" ref="1">
    <original>M</original>
    <variation>I</variation>
    <location>
        <position position="252"/>
    </location>
</feature>
<dbReference type="EC" id="4.1.2.63" evidence="4"/>
<dbReference type="EMBL" id="AJ132139">
    <property type="protein sequence ID" value="CAB65550.1"/>
    <property type="molecule type" value="mRNA"/>
</dbReference>
<dbReference type="EMBL" id="AK005505">
    <property type="protein sequence ID" value="BAB24085.1"/>
    <property type="molecule type" value="mRNA"/>
</dbReference>
<dbReference type="EMBL" id="AK041686">
    <property type="protein sequence ID" value="BAC31032.1"/>
    <property type="molecule type" value="mRNA"/>
</dbReference>
<dbReference type="EMBL" id="AK050078">
    <property type="protein sequence ID" value="BAC34059.1"/>
    <property type="molecule type" value="mRNA"/>
</dbReference>
<dbReference type="EMBL" id="BC021360">
    <property type="protein sequence ID" value="AAH21360.1"/>
    <property type="molecule type" value="mRNA"/>
</dbReference>
<dbReference type="CCDS" id="CCDS26915.1"/>
<dbReference type="RefSeq" id="NP_064359.2">
    <property type="nucleotide sequence ID" value="NM_019975.3"/>
</dbReference>
<dbReference type="SMR" id="Q9QXE0"/>
<dbReference type="BioGRID" id="208178">
    <property type="interactions" value="14"/>
</dbReference>
<dbReference type="FunCoup" id="Q9QXE0">
    <property type="interactions" value="2556"/>
</dbReference>
<dbReference type="STRING" id="10090.ENSMUSP00000022437"/>
<dbReference type="GlyGen" id="Q9QXE0">
    <property type="glycosylation" value="1 site, 1 O-linked glycan (1 site)"/>
</dbReference>
<dbReference type="iPTMnet" id="Q9QXE0"/>
<dbReference type="PhosphoSitePlus" id="Q9QXE0"/>
<dbReference type="SwissPalm" id="Q9QXE0"/>
<dbReference type="jPOST" id="Q9QXE0"/>
<dbReference type="PaxDb" id="10090-ENSMUSP00000022437"/>
<dbReference type="ProteomicsDB" id="269709"/>
<dbReference type="Pumba" id="Q9QXE0"/>
<dbReference type="DNASU" id="56794"/>
<dbReference type="Ensembl" id="ENSMUST00000022437.16">
    <property type="protein sequence ID" value="ENSMUSP00000022437.9"/>
    <property type="gene ID" value="ENSMUSG00000021884.19"/>
</dbReference>
<dbReference type="Ensembl" id="ENSMUST00000156431.8">
    <property type="protein sequence ID" value="ENSMUSP00000114922.2"/>
    <property type="gene ID" value="ENSMUSG00000021884.19"/>
</dbReference>
<dbReference type="GeneID" id="56794"/>
<dbReference type="KEGG" id="mmu:56794"/>
<dbReference type="UCSC" id="uc007sxx.2">
    <property type="organism name" value="mouse"/>
</dbReference>
<dbReference type="AGR" id="MGI:1929657"/>
<dbReference type="CTD" id="26061"/>
<dbReference type="MGI" id="MGI:1929657">
    <property type="gene designation" value="Hacl1"/>
</dbReference>
<dbReference type="VEuPathDB" id="HostDB:ENSMUSG00000021884"/>
<dbReference type="eggNOG" id="KOG1185">
    <property type="taxonomic scope" value="Eukaryota"/>
</dbReference>
<dbReference type="GeneTree" id="ENSGT00940000156802"/>
<dbReference type="InParanoid" id="Q9QXE0"/>
<dbReference type="OMA" id="YMGMIGM"/>
<dbReference type="OrthoDB" id="10006023at2759"/>
<dbReference type="PhylomeDB" id="Q9QXE0"/>
<dbReference type="TreeFam" id="TF105690"/>
<dbReference type="BRENDA" id="4.1.2.63">
    <property type="organism ID" value="3474"/>
</dbReference>
<dbReference type="Reactome" id="R-MMU-389599">
    <property type="pathway name" value="Alpha-oxidation of phytanate"/>
</dbReference>
<dbReference type="Reactome" id="R-MMU-9033241">
    <property type="pathway name" value="Peroxisomal protein import"/>
</dbReference>
<dbReference type="UniPathway" id="UPA00199"/>
<dbReference type="BioGRID-ORCS" id="56794">
    <property type="hits" value="0 hits in 76 CRISPR screens"/>
</dbReference>
<dbReference type="PRO" id="PR:Q9QXE0"/>
<dbReference type="Proteomes" id="UP000000589">
    <property type="component" value="Chromosome 14"/>
</dbReference>
<dbReference type="RNAct" id="Q9QXE0">
    <property type="molecule type" value="protein"/>
</dbReference>
<dbReference type="Bgee" id="ENSMUSG00000021884">
    <property type="expression patterns" value="Expressed in liver and 83 other cell types or tissues"/>
</dbReference>
<dbReference type="ExpressionAtlas" id="Q9QXE0">
    <property type="expression patterns" value="baseline and differential"/>
</dbReference>
<dbReference type="GO" id="GO:0005654">
    <property type="term" value="C:nucleoplasm"/>
    <property type="evidence" value="ECO:0007669"/>
    <property type="project" value="Ensembl"/>
</dbReference>
<dbReference type="GO" id="GO:0005777">
    <property type="term" value="C:peroxisome"/>
    <property type="evidence" value="ECO:0000250"/>
    <property type="project" value="HGNC-UCL"/>
</dbReference>
<dbReference type="GO" id="GO:0106376">
    <property type="term" value="F:2-hydroxyphytanoyl-CoA lyase activity"/>
    <property type="evidence" value="ECO:0007669"/>
    <property type="project" value="RHEA"/>
</dbReference>
<dbReference type="GO" id="GO:0005524">
    <property type="term" value="F:ATP binding"/>
    <property type="evidence" value="ECO:0007669"/>
    <property type="project" value="Ensembl"/>
</dbReference>
<dbReference type="GO" id="GO:0016830">
    <property type="term" value="F:carbon-carbon lyase activity"/>
    <property type="evidence" value="ECO:0000315"/>
    <property type="project" value="UniProtKB"/>
</dbReference>
<dbReference type="GO" id="GO:0042802">
    <property type="term" value="F:identical protein binding"/>
    <property type="evidence" value="ECO:0000250"/>
    <property type="project" value="UniProtKB"/>
</dbReference>
<dbReference type="GO" id="GO:0016829">
    <property type="term" value="F:lyase activity"/>
    <property type="evidence" value="ECO:0000314"/>
    <property type="project" value="MGI"/>
</dbReference>
<dbReference type="GO" id="GO:0000287">
    <property type="term" value="F:magnesium ion binding"/>
    <property type="evidence" value="ECO:0000250"/>
    <property type="project" value="UniProtKB"/>
</dbReference>
<dbReference type="GO" id="GO:0030976">
    <property type="term" value="F:thiamine pyrophosphate binding"/>
    <property type="evidence" value="ECO:0000250"/>
    <property type="project" value="HGNC-UCL"/>
</dbReference>
<dbReference type="GO" id="GO:0001561">
    <property type="term" value="P:fatty acid alpha-oxidation"/>
    <property type="evidence" value="ECO:0000315"/>
    <property type="project" value="UniProtKB"/>
</dbReference>
<dbReference type="GO" id="GO:0006629">
    <property type="term" value="P:lipid metabolic process"/>
    <property type="evidence" value="ECO:0000314"/>
    <property type="project" value="MGI"/>
</dbReference>
<dbReference type="GO" id="GO:0097089">
    <property type="term" value="P:methyl-branched fatty acid metabolic process"/>
    <property type="evidence" value="ECO:0000250"/>
    <property type="project" value="UniProtKB"/>
</dbReference>
<dbReference type="GO" id="GO:1903512">
    <property type="term" value="P:phytanic acid metabolic process"/>
    <property type="evidence" value="ECO:0000250"/>
    <property type="project" value="UniProtKB"/>
</dbReference>
<dbReference type="GO" id="GO:0006625">
    <property type="term" value="P:protein targeting to peroxisome"/>
    <property type="evidence" value="ECO:0000250"/>
    <property type="project" value="UniProtKB"/>
</dbReference>
<dbReference type="CDD" id="cd02004">
    <property type="entry name" value="TPP_BZL_OCoD_HPCL"/>
    <property type="match status" value="1"/>
</dbReference>
<dbReference type="CDD" id="cd07035">
    <property type="entry name" value="TPP_PYR_POX_like"/>
    <property type="match status" value="1"/>
</dbReference>
<dbReference type="FunFam" id="3.40.50.1220:FF:000006">
    <property type="entry name" value="2-hydroxyacyl-CoA lyase 1"/>
    <property type="match status" value="1"/>
</dbReference>
<dbReference type="FunFam" id="3.40.50.970:FF:000027">
    <property type="entry name" value="2-hydroxyacyl-CoA lyase 1"/>
    <property type="match status" value="1"/>
</dbReference>
<dbReference type="FunFam" id="3.40.50.970:FF:000038">
    <property type="entry name" value="2-hydroxyacyl-CoA lyase 1 isoform X1"/>
    <property type="match status" value="1"/>
</dbReference>
<dbReference type="Gene3D" id="3.40.50.970">
    <property type="match status" value="2"/>
</dbReference>
<dbReference type="Gene3D" id="3.40.50.1220">
    <property type="entry name" value="TPP-binding domain"/>
    <property type="match status" value="1"/>
</dbReference>
<dbReference type="InterPro" id="IPR029035">
    <property type="entry name" value="DHS-like_NAD/FAD-binding_dom"/>
</dbReference>
<dbReference type="InterPro" id="IPR045025">
    <property type="entry name" value="HACL1-like"/>
</dbReference>
<dbReference type="InterPro" id="IPR029061">
    <property type="entry name" value="THDP-binding"/>
</dbReference>
<dbReference type="InterPro" id="IPR012000">
    <property type="entry name" value="Thiamin_PyroP_enz_cen_dom"/>
</dbReference>
<dbReference type="InterPro" id="IPR012001">
    <property type="entry name" value="Thiamin_PyroP_enz_TPP-bd_dom"/>
</dbReference>
<dbReference type="InterPro" id="IPR011766">
    <property type="entry name" value="TPP_enzyme_TPP-bd"/>
</dbReference>
<dbReference type="NCBIfam" id="NF006721">
    <property type="entry name" value="PRK09259.1"/>
    <property type="match status" value="1"/>
</dbReference>
<dbReference type="PANTHER" id="PTHR43710">
    <property type="entry name" value="2-HYDROXYACYL-COA LYASE"/>
    <property type="match status" value="1"/>
</dbReference>
<dbReference type="PANTHER" id="PTHR43710:SF2">
    <property type="entry name" value="2-HYDROXYACYL-COA LYASE 1"/>
    <property type="match status" value="1"/>
</dbReference>
<dbReference type="Pfam" id="PF02775">
    <property type="entry name" value="TPP_enzyme_C"/>
    <property type="match status" value="1"/>
</dbReference>
<dbReference type="Pfam" id="PF00205">
    <property type="entry name" value="TPP_enzyme_M"/>
    <property type="match status" value="1"/>
</dbReference>
<dbReference type="Pfam" id="PF02776">
    <property type="entry name" value="TPP_enzyme_N"/>
    <property type="match status" value="1"/>
</dbReference>
<dbReference type="SUPFAM" id="SSF52467">
    <property type="entry name" value="DHS-like NAD/FAD-binding domain"/>
    <property type="match status" value="1"/>
</dbReference>
<dbReference type="SUPFAM" id="SSF52518">
    <property type="entry name" value="Thiamin diphosphate-binding fold (THDP-binding)"/>
    <property type="match status" value="2"/>
</dbReference>
<comment type="function">
    <text evidence="3 5">Peroxisomal 2-OH acyl-CoA lyase involved in the cleavage (C1 removal) reaction in the fatty acid alpha-oxydation in a thiamine pyrophosphate (TPP)-dependent manner (By similarity). Involved in the degradation of 3-methyl-branched fatty acids like phytanic acid and the shortening of 2-hydroxy long-chain fatty acids (By similarity). Plays a significant role in the biosynthesis of heptadecanal in the liver (PubMed:29027957).</text>
</comment>
<comment type="catalytic activity">
    <reaction evidence="2">
        <text>a 2-hydroxy-3-methyl fatty acyl-CoA = a 2-methyl-branched fatty aldehyde + formyl-CoA</text>
        <dbReference type="Rhea" id="RHEA:25375"/>
        <dbReference type="ChEBI" id="CHEBI:49188"/>
        <dbReference type="ChEBI" id="CHEBI:57376"/>
        <dbReference type="ChEBI" id="CHEBI:58783"/>
        <dbReference type="EC" id="4.1.2.63"/>
    </reaction>
    <physiologicalReaction direction="left-to-right" evidence="2">
        <dbReference type="Rhea" id="RHEA:25376"/>
    </physiologicalReaction>
</comment>
<comment type="catalytic activity">
    <reaction evidence="2">
        <text>an (R)-2-hydroxy-long-chain-fatty acyl-CoA = a long-chain fatty aldehyde + formyl-CoA</text>
        <dbReference type="Rhea" id="RHEA:67444"/>
        <dbReference type="ChEBI" id="CHEBI:17176"/>
        <dbReference type="ChEBI" id="CHEBI:57376"/>
        <dbReference type="ChEBI" id="CHEBI:170012"/>
        <dbReference type="EC" id="4.1.2.63"/>
    </reaction>
    <physiologicalReaction direction="left-to-right" evidence="2">
        <dbReference type="Rhea" id="RHEA:67445"/>
    </physiologicalReaction>
</comment>
<comment type="catalytic activity">
    <reaction evidence="2">
        <text>2-hydroxy-3-methylhexadecanoyl-CoA = 2-methylpentadecanal + formyl-CoA</text>
        <dbReference type="Rhea" id="RHEA:25379"/>
        <dbReference type="ChEBI" id="CHEBI:49190"/>
        <dbReference type="ChEBI" id="CHEBI:57376"/>
        <dbReference type="ChEBI" id="CHEBI:58784"/>
    </reaction>
    <physiologicalReaction direction="left-to-right" evidence="2">
        <dbReference type="Rhea" id="RHEA:25380"/>
    </physiologicalReaction>
</comment>
<comment type="catalytic activity">
    <reaction evidence="4">
        <text>2-hydroxyoctadecanoyl-CoA = heptadecanal + formyl-CoA</text>
        <dbReference type="Rhea" id="RHEA:55196"/>
        <dbReference type="ChEBI" id="CHEBI:57376"/>
        <dbReference type="ChEBI" id="CHEBI:74116"/>
        <dbReference type="ChEBI" id="CHEBI:138631"/>
    </reaction>
    <physiologicalReaction direction="left-to-right" evidence="3">
        <dbReference type="Rhea" id="RHEA:55197"/>
    </physiologicalReaction>
</comment>
<comment type="catalytic activity">
    <reaction evidence="3">
        <text>2-hydroxyphytanoyl-CoA = 2,6,10,14-tetramethylpentadecanal + formyl-CoA</text>
        <dbReference type="Rhea" id="RHEA:25355"/>
        <dbReference type="ChEBI" id="CHEBI:49189"/>
        <dbReference type="ChEBI" id="CHEBI:57334"/>
        <dbReference type="ChEBI" id="CHEBI:57376"/>
    </reaction>
    <physiologicalReaction direction="left-to-right" evidence="3">
        <dbReference type="Rhea" id="RHEA:25356"/>
    </physiologicalReaction>
</comment>
<comment type="cofactor">
    <cofactor evidence="2">
        <name>Mg(2+)</name>
        <dbReference type="ChEBI" id="CHEBI:18420"/>
    </cofactor>
    <text evidence="2">Binds 1 Mg(2+) ion per subunit.</text>
</comment>
<comment type="cofactor">
    <cofactor evidence="2">
        <name>thiamine diphosphate</name>
        <dbReference type="ChEBI" id="CHEBI:58937"/>
    </cofactor>
    <text evidence="2">Binds 1 thiamine pyrophosphate per subunit.</text>
</comment>
<comment type="pathway">
    <text>Lipid metabolism; fatty acid metabolism.</text>
</comment>
<comment type="subunit">
    <text evidence="2">Homotetramer.</text>
</comment>
<comment type="subcellular location">
    <subcellularLocation>
        <location evidence="3">Peroxisome</location>
    </subcellularLocation>
</comment>
<comment type="tissue specificity">
    <text evidence="4">Predominanly expressed in liver.</text>
</comment>
<comment type="disruption phenotype">
    <text evidence="4 5">Mice are viable and fertile and show no abnormal phenotype (PubMed:28629946, PubMed:29027957). However, upon dietary administration of phytol, phytanic acid accumulated in tissues, mainly in liver and serum of deficient mice. As a consequence of phytanic acid (or a metabolite) toxicity, deficent mice display a significant weight loss, absence of abdominal white adipose tissue, enlarged and mottled liver and reduced hepatic glycogen and triglyceride (PubMed:28629946). The presence of an other lyase, probably HCL2, can partially compensate for the loss of HCL1 (PubMed:28629946).</text>
</comment>
<comment type="similarity">
    <text evidence="6">Belongs to the TPP enzyme family.</text>
</comment>
<organism>
    <name type="scientific">Mus musculus</name>
    <name type="common">Mouse</name>
    <dbReference type="NCBI Taxonomy" id="10090"/>
    <lineage>
        <taxon>Eukaryota</taxon>
        <taxon>Metazoa</taxon>
        <taxon>Chordata</taxon>
        <taxon>Craniata</taxon>
        <taxon>Vertebrata</taxon>
        <taxon>Euteleostomi</taxon>
        <taxon>Mammalia</taxon>
        <taxon>Eutheria</taxon>
        <taxon>Euarchontoglires</taxon>
        <taxon>Glires</taxon>
        <taxon>Rodentia</taxon>
        <taxon>Myomorpha</taxon>
        <taxon>Muroidea</taxon>
        <taxon>Muridae</taxon>
        <taxon>Murinae</taxon>
        <taxon>Mus</taxon>
        <taxon>Mus</taxon>
    </lineage>
</organism>
<proteinExistence type="evidence at protein level"/>
<evidence type="ECO:0000250" key="1">
    <source>
        <dbReference type="UniProtKB" id="P40149"/>
    </source>
</evidence>
<evidence type="ECO:0000250" key="2">
    <source>
        <dbReference type="UniProtKB" id="Q8CHM7"/>
    </source>
</evidence>
<evidence type="ECO:0000250" key="3">
    <source>
        <dbReference type="UniProtKB" id="Q9UJ83"/>
    </source>
</evidence>
<evidence type="ECO:0000269" key="4">
    <source>
    </source>
</evidence>
<evidence type="ECO:0000269" key="5">
    <source>
    </source>
</evidence>
<evidence type="ECO:0000305" key="6"/>
<evidence type="ECO:0007744" key="7">
    <source>
    </source>
</evidence>
<keyword id="KW-0276">Fatty acid metabolism</keyword>
<keyword id="KW-0443">Lipid metabolism</keyword>
<keyword id="KW-0456">Lyase</keyword>
<keyword id="KW-0460">Magnesium</keyword>
<keyword id="KW-0479">Metal-binding</keyword>
<keyword id="KW-0576">Peroxisome</keyword>
<keyword id="KW-0597">Phosphoprotein</keyword>
<keyword id="KW-1185">Reference proteome</keyword>
<keyword id="KW-0786">Thiamine pyrophosphate</keyword>
<name>HACL1_MOUSE</name>
<reference key="1">
    <citation type="journal article" date="2001" name="Biochem. J.">
        <title>Prenatal and postnatal development of peroxisomal lipid-metabolizing pathways in the mouse.</title>
        <authorList>
            <person name="Huyghe S."/>
            <person name="Casteels M."/>
            <person name="Janssen A."/>
            <person name="Meulders L."/>
            <person name="Mannaerts G.P."/>
            <person name="Declercq P.E."/>
            <person name="Van Veldhoven P.P."/>
            <person name="Baes M."/>
        </authorList>
    </citation>
    <scope>NUCLEOTIDE SEQUENCE [MRNA]</scope>
</reference>
<reference key="2">
    <citation type="journal article" date="2005" name="Science">
        <title>The transcriptional landscape of the mammalian genome.</title>
        <authorList>
            <person name="Carninci P."/>
            <person name="Kasukawa T."/>
            <person name="Katayama S."/>
            <person name="Gough J."/>
            <person name="Frith M.C."/>
            <person name="Maeda N."/>
            <person name="Oyama R."/>
            <person name="Ravasi T."/>
            <person name="Lenhard B."/>
            <person name="Wells C."/>
            <person name="Kodzius R."/>
            <person name="Shimokawa K."/>
            <person name="Bajic V.B."/>
            <person name="Brenner S.E."/>
            <person name="Batalov S."/>
            <person name="Forrest A.R."/>
            <person name="Zavolan M."/>
            <person name="Davis M.J."/>
            <person name="Wilming L.G."/>
            <person name="Aidinis V."/>
            <person name="Allen J.E."/>
            <person name="Ambesi-Impiombato A."/>
            <person name="Apweiler R."/>
            <person name="Aturaliya R.N."/>
            <person name="Bailey T.L."/>
            <person name="Bansal M."/>
            <person name="Baxter L."/>
            <person name="Beisel K.W."/>
            <person name="Bersano T."/>
            <person name="Bono H."/>
            <person name="Chalk A.M."/>
            <person name="Chiu K.P."/>
            <person name="Choudhary V."/>
            <person name="Christoffels A."/>
            <person name="Clutterbuck D.R."/>
            <person name="Crowe M.L."/>
            <person name="Dalla E."/>
            <person name="Dalrymple B.P."/>
            <person name="de Bono B."/>
            <person name="Della Gatta G."/>
            <person name="di Bernardo D."/>
            <person name="Down T."/>
            <person name="Engstrom P."/>
            <person name="Fagiolini M."/>
            <person name="Faulkner G."/>
            <person name="Fletcher C.F."/>
            <person name="Fukushima T."/>
            <person name="Furuno M."/>
            <person name="Futaki S."/>
            <person name="Gariboldi M."/>
            <person name="Georgii-Hemming P."/>
            <person name="Gingeras T.R."/>
            <person name="Gojobori T."/>
            <person name="Green R.E."/>
            <person name="Gustincich S."/>
            <person name="Harbers M."/>
            <person name="Hayashi Y."/>
            <person name="Hensch T.K."/>
            <person name="Hirokawa N."/>
            <person name="Hill D."/>
            <person name="Huminiecki L."/>
            <person name="Iacono M."/>
            <person name="Ikeo K."/>
            <person name="Iwama A."/>
            <person name="Ishikawa T."/>
            <person name="Jakt M."/>
            <person name="Kanapin A."/>
            <person name="Katoh M."/>
            <person name="Kawasawa Y."/>
            <person name="Kelso J."/>
            <person name="Kitamura H."/>
            <person name="Kitano H."/>
            <person name="Kollias G."/>
            <person name="Krishnan S.P."/>
            <person name="Kruger A."/>
            <person name="Kummerfeld S.K."/>
            <person name="Kurochkin I.V."/>
            <person name="Lareau L.F."/>
            <person name="Lazarevic D."/>
            <person name="Lipovich L."/>
            <person name="Liu J."/>
            <person name="Liuni S."/>
            <person name="McWilliam S."/>
            <person name="Madan Babu M."/>
            <person name="Madera M."/>
            <person name="Marchionni L."/>
            <person name="Matsuda H."/>
            <person name="Matsuzawa S."/>
            <person name="Miki H."/>
            <person name="Mignone F."/>
            <person name="Miyake S."/>
            <person name="Morris K."/>
            <person name="Mottagui-Tabar S."/>
            <person name="Mulder N."/>
            <person name="Nakano N."/>
            <person name="Nakauchi H."/>
            <person name="Ng P."/>
            <person name="Nilsson R."/>
            <person name="Nishiguchi S."/>
            <person name="Nishikawa S."/>
            <person name="Nori F."/>
            <person name="Ohara O."/>
            <person name="Okazaki Y."/>
            <person name="Orlando V."/>
            <person name="Pang K.C."/>
            <person name="Pavan W.J."/>
            <person name="Pavesi G."/>
            <person name="Pesole G."/>
            <person name="Petrovsky N."/>
            <person name="Piazza S."/>
            <person name="Reed J."/>
            <person name="Reid J.F."/>
            <person name="Ring B.Z."/>
            <person name="Ringwald M."/>
            <person name="Rost B."/>
            <person name="Ruan Y."/>
            <person name="Salzberg S.L."/>
            <person name="Sandelin A."/>
            <person name="Schneider C."/>
            <person name="Schoenbach C."/>
            <person name="Sekiguchi K."/>
            <person name="Semple C.A."/>
            <person name="Seno S."/>
            <person name="Sessa L."/>
            <person name="Sheng Y."/>
            <person name="Shibata Y."/>
            <person name="Shimada H."/>
            <person name="Shimada K."/>
            <person name="Silva D."/>
            <person name="Sinclair B."/>
            <person name="Sperling S."/>
            <person name="Stupka E."/>
            <person name="Sugiura K."/>
            <person name="Sultana R."/>
            <person name="Takenaka Y."/>
            <person name="Taki K."/>
            <person name="Tammoja K."/>
            <person name="Tan S.L."/>
            <person name="Tang S."/>
            <person name="Taylor M.S."/>
            <person name="Tegner J."/>
            <person name="Teichmann S.A."/>
            <person name="Ueda H.R."/>
            <person name="van Nimwegen E."/>
            <person name="Verardo R."/>
            <person name="Wei C.L."/>
            <person name="Yagi K."/>
            <person name="Yamanishi H."/>
            <person name="Zabarovsky E."/>
            <person name="Zhu S."/>
            <person name="Zimmer A."/>
            <person name="Hide W."/>
            <person name="Bult C."/>
            <person name="Grimmond S.M."/>
            <person name="Teasdale R.D."/>
            <person name="Liu E.T."/>
            <person name="Brusic V."/>
            <person name="Quackenbush J."/>
            <person name="Wahlestedt C."/>
            <person name="Mattick J.S."/>
            <person name="Hume D.A."/>
            <person name="Kai C."/>
            <person name="Sasaki D."/>
            <person name="Tomaru Y."/>
            <person name="Fukuda S."/>
            <person name="Kanamori-Katayama M."/>
            <person name="Suzuki M."/>
            <person name="Aoki J."/>
            <person name="Arakawa T."/>
            <person name="Iida J."/>
            <person name="Imamura K."/>
            <person name="Itoh M."/>
            <person name="Kato T."/>
            <person name="Kawaji H."/>
            <person name="Kawagashira N."/>
            <person name="Kawashima T."/>
            <person name="Kojima M."/>
            <person name="Kondo S."/>
            <person name="Konno H."/>
            <person name="Nakano K."/>
            <person name="Ninomiya N."/>
            <person name="Nishio T."/>
            <person name="Okada M."/>
            <person name="Plessy C."/>
            <person name="Shibata K."/>
            <person name="Shiraki T."/>
            <person name="Suzuki S."/>
            <person name="Tagami M."/>
            <person name="Waki K."/>
            <person name="Watahiki A."/>
            <person name="Okamura-Oho Y."/>
            <person name="Suzuki H."/>
            <person name="Kawai J."/>
            <person name="Hayashizaki Y."/>
        </authorList>
    </citation>
    <scope>NUCLEOTIDE SEQUENCE [LARGE SCALE MRNA]</scope>
    <source>
        <strain>C57BL/6J</strain>
        <tissue>Liver</tissue>
        <tissue>Placenta</tissue>
        <tissue>Thymus</tissue>
    </source>
</reference>
<reference key="3">
    <citation type="journal article" date="2004" name="Genome Res.">
        <title>The status, quality, and expansion of the NIH full-length cDNA project: the Mammalian Gene Collection (MGC).</title>
        <authorList>
            <consortium name="The MGC Project Team"/>
        </authorList>
    </citation>
    <scope>NUCLEOTIDE SEQUENCE [LARGE SCALE MRNA]</scope>
</reference>
<reference key="4">
    <citation type="journal article" date="2007" name="Mol. Cell. Proteomics">
        <title>Mitochondrial phosphoproteome revealed by an improved IMAC method and MS/MS/MS.</title>
        <authorList>
            <person name="Lee J."/>
            <person name="Xu Y."/>
            <person name="Chen Y."/>
            <person name="Sprung R."/>
            <person name="Kim S.C."/>
            <person name="Xie S."/>
            <person name="Zhao Y."/>
        </authorList>
    </citation>
    <scope>IDENTIFICATION BY MASS SPECTROMETRY [LARGE SCALE ANALYSIS]</scope>
    <source>
        <tissue>Liver</tissue>
    </source>
</reference>
<reference key="5">
    <citation type="journal article" date="2010" name="Cell">
        <title>A tissue-specific atlas of mouse protein phosphorylation and expression.</title>
        <authorList>
            <person name="Huttlin E.L."/>
            <person name="Jedrychowski M.P."/>
            <person name="Elias J.E."/>
            <person name="Goswami T."/>
            <person name="Rad R."/>
            <person name="Beausoleil S.A."/>
            <person name="Villen J."/>
            <person name="Haas W."/>
            <person name="Sowa M.E."/>
            <person name="Gygi S.P."/>
        </authorList>
    </citation>
    <scope>IDENTIFICATION BY MASS SPECTROMETRY [LARGE SCALE ANALYSIS]</scope>
    <source>
        <tissue>Brown adipose tissue</tissue>
        <tissue>Kidney</tissue>
        <tissue>Liver</tissue>
        <tissue>Testis</tissue>
    </source>
</reference>
<reference key="6">
    <citation type="journal article" date="2013" name="Mol. Cell">
        <title>SIRT5-mediated lysine desuccinylation impacts diverse metabolic pathways.</title>
        <authorList>
            <person name="Park J."/>
            <person name="Chen Y."/>
            <person name="Tishkoff D.X."/>
            <person name="Peng C."/>
            <person name="Tan M."/>
            <person name="Dai L."/>
            <person name="Xie Z."/>
            <person name="Zhang Y."/>
            <person name="Zwaans B.M."/>
            <person name="Skinner M.E."/>
            <person name="Lombard D.B."/>
            <person name="Zhao Y."/>
        </authorList>
    </citation>
    <scope>SUCCINYLATION [LARGE SCALE ANALYSIS] AT LYS-354; LYS-361 AND LYS-368</scope>
    <scope>IDENTIFICATION BY MASS SPECTROMETRY [LARGE SCALE ANALYSIS]</scope>
    <source>
        <tissue>Liver</tissue>
    </source>
</reference>
<reference key="7">
    <citation type="journal article" date="2017" name="Biochim. Biophys. Acta">
        <title>Phytol-induced pathology in 2-hydroxyacyl-CoA lyase (HACL1) deficient mice. Evidence for a second non-HACL1-related lyase.</title>
        <authorList>
            <person name="Mezzar S."/>
            <person name="De Schryver E."/>
            <person name="Asselberghs S."/>
            <person name="Meyhi E."/>
            <person name="Morvay P.L."/>
            <person name="Baes M."/>
            <person name="Van Veldhoven P.P."/>
        </authorList>
    </citation>
    <scope>DISRUPTION PHENOTYPE</scope>
    <scope>CATALYTIC ACTIVITY</scope>
    <scope>FUNCTION</scope>
    <scope>TISSUE SPECIFICITY</scope>
</reference>
<reference key="8">
    <citation type="journal article" date="2017" name="Molecules">
        <title>Peroxisomal 2-Hydroxyacyl-CoA Lyase Is Involved in Endogenous Biosynthesis of Heptadecanoic Acid.</title>
        <authorList>
            <person name="Jenkins B."/>
            <person name="de Schryver E."/>
            <person name="Van Veldhoven P.P."/>
            <person name="Koulman A."/>
        </authorList>
    </citation>
    <scope>DISRUPTION PHENOTYPE</scope>
    <scope>FUNCTION</scope>
</reference>
<protein>
    <recommendedName>
        <fullName>2-hydroxyacyl-CoA lyase 1</fullName>
        <ecNumber evidence="4">4.1.2.63</ecNumber>
    </recommendedName>
    <alternativeName>
        <fullName>2-hydroxyphytanoyl-CoA lyase</fullName>
        <shortName>2-HPCL</shortName>
    </alternativeName>
    <alternativeName>
        <fullName>Phytanoyl-CoA 2-hydroxylase 2</fullName>
    </alternativeName>
</protein>
<sequence>MPESNSAEGSDRSEEQVSGAKVIAQALKTQDVEYMFGVVGIPVTEIALAAQELGIKYIGMRNEQAACYAASAVGYLTGRPGVCLVVSGPGLIHALGGMANANMNCWPLIVIGGSSERNQEAMGAFQEFPQVEACRLYTKFSARPSTIELIPFIIEKAVRSSIYGRPGACYIDIPADFVTLQANVTSIKYKECCMPPPVSMAETSAVCAAASVLRDAKQPLLIIGKGAAYSHAEDSIRKLVEQCSLPFLPTPMGKGVVPDNHPNCVGAARSRALQSADVIVLFGARLNWILHFGLPPRYQADVKFIQIDICAEELGNNVRPSVILLGDIDAVSKQLLEQFDKTPWQCPPDSQWWKTLREKMKSNEAISKELASQKSLPMNYYTVFYHVQEQLPRDSFIVSEGANTMDIGRTMLQNCLPRHRLDAGSFGTMGVGLGFAIAAALVAKDRSPGQRVICVEGDSAFGFSGMEVETICRYNLPIILLVVNNNGIYQGFDADTWEKMLHFQEAATTVPPMCLLPNSHYEQVMTAFGGKGYFVRTPEELQHSLRQALQDTSKPCLLNIMIEPQSTRKAQDFHWLTRSNM</sequence>
<accession>Q9QXE0</accession>
<accession>Q543K1</accession>
<accession>Q9DAV1</accession>